<evidence type="ECO:0000256" key="1">
    <source>
        <dbReference type="SAM" id="MobiDB-lite"/>
    </source>
</evidence>
<evidence type="ECO:0000269" key="2">
    <source>
    </source>
</evidence>
<evidence type="ECO:0000269" key="3">
    <source>
    </source>
</evidence>
<evidence type="ECO:0000269" key="4">
    <source>
    </source>
</evidence>
<evidence type="ECO:0000269" key="5">
    <source>
    </source>
</evidence>
<evidence type="ECO:0000269" key="6">
    <source>
    </source>
</evidence>
<evidence type="ECO:0000269" key="7">
    <source>
    </source>
</evidence>
<evidence type="ECO:0000269" key="8">
    <source>
    </source>
</evidence>
<evidence type="ECO:0000305" key="9"/>
<gene>
    <name type="primary">NUT1</name>
    <name type="synonym">MED5</name>
    <name type="ordered locus">YGL151W</name>
    <name type="ORF">G1876</name>
</gene>
<protein>
    <recommendedName>
        <fullName>Mediator of RNA polymerase II transcription subunit 5</fullName>
    </recommendedName>
    <alternativeName>
        <fullName>Mediator complex subunit 5</fullName>
    </alternativeName>
    <alternativeName>
        <fullName>Negative regulator of URS2 protein 1</fullName>
    </alternativeName>
</protein>
<comment type="function">
    <text evidence="4 5 6 8">Component of the Mediator complex, a coactivator involved in the regulated transcription of nearly all RNA polymerase II-dependent genes. Mediator functions as a bridge to convey information from gene-specific regulatory proteins to the basal RNA polymerase II transcription machinery. The Mediator complex, having a compact conformation in its free form, is recruited to promoters by direct interactions with regulatory proteins and serves for the assembly of a functional preinitiation complex with RNA polymerase II and the general transcription factors. The Mediator complex unfolds to an extended conformation and partially surrounds RNA polymerase II, specifically interacting with the unphosphorylated form of the C-terminal domain (CTD) of RNA polymerase II. The Mediator complex dissociates from the RNA polymerase II holoenzyme and stays at the promoter when transcriptional elongation begins.</text>
</comment>
<comment type="subunit">
    <text evidence="7">Component of the Mediator complex, which is composed of at least 21 subunits that form three structurally distinct submodules. The Mediator head module contains MED6, MED8, MED11, SRB4/MED17, SRB5/MED18, ROX3/MED19, SRB2/MED20 and SRB6/MED22, the middle module contains MED1, MED4, NUT1/MED5, MED7, CSE2/MED9, NUT2/MED10, SRB7/MED21 and SOH1/MED31, and the tail module contains MED2, PGD1/MED3, RGR1/MED14, GAL11/MED15 and SIN4/MED16. The head and the middle modules interact directly with RNA polymerase II, whereas the elongated tail module interacts with gene-specific regulatory proteins.</text>
</comment>
<comment type="interaction">
    <interactant intactId="EBI-12407">
        <id>P53114</id>
    </interactant>
    <interactant intactId="EBI-32854">
        <id>Q12321</id>
        <label>MED1</label>
    </interactant>
    <organismsDiffer>false</organismsDiffer>
    <experiments>4</experiments>
</comment>
<comment type="interaction">
    <interactant intactId="EBI-12407">
        <id>P53114</id>
    </interactant>
    <interactant intactId="EBI-17172">
        <id>P32259</id>
        <label>SIN4</label>
    </interactant>
    <organismsDiffer>false</organismsDiffer>
    <experiments>5</experiments>
</comment>
<comment type="subcellular location">
    <subcellularLocation>
        <location evidence="2">Nucleus</location>
    </subcellularLocation>
</comment>
<comment type="miscellaneous">
    <text evidence="3">Present with 2491 molecules/cell in log phase SD medium.</text>
</comment>
<comment type="similarity">
    <text evidence="9">Belongs to the Mediator complex subunit 5 family.</text>
</comment>
<reference key="1">
    <citation type="journal article" date="1995" name="Yeast">
        <title>DNA sequence analysis of a 35 kb segment from Saccharomyces cerevisiae chromosome VII reveals 19 open reading frames including RAD54, ACE1/CUP2, PMR1, RCK1, AMS1 and CAL1/CDC43.</title>
        <authorList>
            <person name="James C.M."/>
            <person name="Indge K.J."/>
            <person name="Oliver S.G."/>
        </authorList>
    </citation>
    <scope>NUCLEOTIDE SEQUENCE [GENOMIC DNA]</scope>
</reference>
<reference key="2">
    <citation type="journal article" date="1997" name="Nature">
        <title>The nucleotide sequence of Saccharomyces cerevisiae chromosome VII.</title>
        <authorList>
            <person name="Tettelin H."/>
            <person name="Agostoni-Carbone M.L."/>
            <person name="Albermann K."/>
            <person name="Albers M."/>
            <person name="Arroyo J."/>
            <person name="Backes U."/>
            <person name="Barreiros T."/>
            <person name="Bertani I."/>
            <person name="Bjourson A.J."/>
            <person name="Brueckner M."/>
            <person name="Bruschi C.V."/>
            <person name="Carignani G."/>
            <person name="Castagnoli L."/>
            <person name="Cerdan E."/>
            <person name="Clemente M.L."/>
            <person name="Coblenz A."/>
            <person name="Coglievina M."/>
            <person name="Coissac E."/>
            <person name="Defoor E."/>
            <person name="Del Bino S."/>
            <person name="Delius H."/>
            <person name="Delneri D."/>
            <person name="de Wergifosse P."/>
            <person name="Dujon B."/>
            <person name="Durand P."/>
            <person name="Entian K.-D."/>
            <person name="Eraso P."/>
            <person name="Escribano V."/>
            <person name="Fabiani L."/>
            <person name="Fartmann B."/>
            <person name="Feroli F."/>
            <person name="Feuermann M."/>
            <person name="Frontali L."/>
            <person name="Garcia-Gonzalez M."/>
            <person name="Garcia-Saez M.I."/>
            <person name="Goffeau A."/>
            <person name="Guerreiro P."/>
            <person name="Hani J."/>
            <person name="Hansen M."/>
            <person name="Hebling U."/>
            <person name="Hernandez K."/>
            <person name="Heumann K."/>
            <person name="Hilger F."/>
            <person name="Hofmann B."/>
            <person name="Indge K.J."/>
            <person name="James C.M."/>
            <person name="Klima R."/>
            <person name="Koetter P."/>
            <person name="Kramer B."/>
            <person name="Kramer W."/>
            <person name="Lauquin G."/>
            <person name="Leuther H."/>
            <person name="Louis E.J."/>
            <person name="Maillier E."/>
            <person name="Marconi A."/>
            <person name="Martegani E."/>
            <person name="Mazon M.J."/>
            <person name="Mazzoni C."/>
            <person name="McReynolds A.D.K."/>
            <person name="Melchioretto P."/>
            <person name="Mewes H.-W."/>
            <person name="Minenkova O."/>
            <person name="Mueller-Auer S."/>
            <person name="Nawrocki A."/>
            <person name="Netter P."/>
            <person name="Neu R."/>
            <person name="Nombela C."/>
            <person name="Oliver S.G."/>
            <person name="Panzeri L."/>
            <person name="Paoluzi S."/>
            <person name="Plevani P."/>
            <person name="Portetelle D."/>
            <person name="Portillo F."/>
            <person name="Potier S."/>
            <person name="Purnelle B."/>
            <person name="Rieger M."/>
            <person name="Riles L."/>
            <person name="Rinaldi T."/>
            <person name="Robben J."/>
            <person name="Rodrigues-Pousada C."/>
            <person name="Rodriguez-Belmonte E."/>
            <person name="Rodriguez-Torres A.M."/>
            <person name="Rose M."/>
            <person name="Ruzzi M."/>
            <person name="Saliola M."/>
            <person name="Sanchez-Perez M."/>
            <person name="Schaefer B."/>
            <person name="Schaefer M."/>
            <person name="Scharfe M."/>
            <person name="Schmidheini T."/>
            <person name="Schreer A."/>
            <person name="Skala J."/>
            <person name="Souciet J.-L."/>
            <person name="Steensma H.Y."/>
            <person name="Talla E."/>
            <person name="Thierry A."/>
            <person name="Vandenbol M."/>
            <person name="van der Aart Q.J.M."/>
            <person name="Van Dyck L."/>
            <person name="Vanoni M."/>
            <person name="Verhasselt P."/>
            <person name="Voet M."/>
            <person name="Volckaert G."/>
            <person name="Wambutt R."/>
            <person name="Watson M.D."/>
            <person name="Weber N."/>
            <person name="Wedler E."/>
            <person name="Wedler H."/>
            <person name="Wipfli P."/>
            <person name="Wolf K."/>
            <person name="Wright L.F."/>
            <person name="Zaccaria P."/>
            <person name="Zimmermann M."/>
            <person name="Zollner A."/>
            <person name="Kleine K."/>
        </authorList>
    </citation>
    <scope>NUCLEOTIDE SEQUENCE [LARGE SCALE GENOMIC DNA]</scope>
    <source>
        <strain>ATCC 204508 / S288c</strain>
    </source>
</reference>
<reference key="3">
    <citation type="journal article" date="2014" name="G3 (Bethesda)">
        <title>The reference genome sequence of Saccharomyces cerevisiae: Then and now.</title>
        <authorList>
            <person name="Engel S.R."/>
            <person name="Dietrich F.S."/>
            <person name="Fisk D.G."/>
            <person name="Binkley G."/>
            <person name="Balakrishnan R."/>
            <person name="Costanzo M.C."/>
            <person name="Dwight S.S."/>
            <person name="Hitz B.C."/>
            <person name="Karra K."/>
            <person name="Nash R.S."/>
            <person name="Weng S."/>
            <person name="Wong E.D."/>
            <person name="Lloyd P."/>
            <person name="Skrzypek M.S."/>
            <person name="Miyasato S.R."/>
            <person name="Simison M."/>
            <person name="Cherry J.M."/>
        </authorList>
    </citation>
    <scope>GENOME REANNOTATION</scope>
    <source>
        <strain>ATCC 204508 / S288c</strain>
    </source>
</reference>
<reference key="4">
    <citation type="journal article" date="1998" name="J. Biol. Chem.">
        <title>Identification of new mediator subunits in the RNA polymerase II holoenzyme from Saccharomyces cerevisiae.</title>
        <authorList>
            <person name="Gustafsson C.M."/>
            <person name="Myers L.C."/>
            <person name="Beve J."/>
            <person name="Spaahr H."/>
            <person name="Lui M."/>
            <person name="Erdjument-Bromage H."/>
            <person name="Tempst P."/>
            <person name="Kornberg R.D."/>
        </authorList>
    </citation>
    <scope>COMPONENT OF MEDIATOR COMPLEX</scope>
</reference>
<reference key="5">
    <citation type="journal article" date="1998" name="Mol. Cell. Biol.">
        <title>Nuclear proteins Nut1p and Nut2p cooperate to negatively regulate a Swi4p-dependent lacZ reporter gene in Saccharomyces cerevisiae.</title>
        <authorList>
            <person name="Tabtiang R.K."/>
            <person name="Herskowitz I."/>
        </authorList>
    </citation>
    <scope>FUNCTION</scope>
</reference>
<reference key="6">
    <citation type="journal article" date="2003" name="Nature">
        <title>Global analysis of protein localization in budding yeast.</title>
        <authorList>
            <person name="Huh W.-K."/>
            <person name="Falvo J.V."/>
            <person name="Gerke L.C."/>
            <person name="Carroll A.S."/>
            <person name="Howson R.W."/>
            <person name="Weissman J.S."/>
            <person name="O'Shea E.K."/>
        </authorList>
    </citation>
    <scope>SUBCELLULAR LOCATION [LARGE SCALE ANALYSIS]</scope>
</reference>
<reference key="7">
    <citation type="journal article" date="2003" name="Nature">
        <title>Global analysis of protein expression in yeast.</title>
        <authorList>
            <person name="Ghaemmaghami S."/>
            <person name="Huh W.-K."/>
            <person name="Bower K."/>
            <person name="Howson R.W."/>
            <person name="Belle A."/>
            <person name="Dephoure N."/>
            <person name="O'Shea E.K."/>
            <person name="Weissman J.S."/>
        </authorList>
    </citation>
    <scope>LEVEL OF PROTEIN EXPRESSION [LARGE SCALE ANALYSIS]</scope>
</reference>
<reference key="8">
    <citation type="journal article" date="2003" name="Proc. Natl. Acad. Sci. U.S.A.">
        <title>Association of the Mediator complex with enhancers of active genes.</title>
        <authorList>
            <person name="Kuras L."/>
            <person name="Borggrefe T."/>
            <person name="Kornberg R.D."/>
        </authorList>
    </citation>
    <scope>ASSOCIATION WITH PROMOTER REGIONS</scope>
</reference>
<reference key="9">
    <citation type="journal article" date="2004" name="Mol. Cell">
        <title>A unified nomenclature for protein subunits of mediator complexes linking transcriptional regulators to RNA polymerase II.</title>
        <authorList>
            <person name="Bourbon H.-M."/>
            <person name="Aguilera A."/>
            <person name="Ansari A.Z."/>
            <person name="Asturias F.J."/>
            <person name="Berk A.J."/>
            <person name="Bjoerklund S."/>
            <person name="Blackwell T.K."/>
            <person name="Borggrefe T."/>
            <person name="Carey M."/>
            <person name="Carlson M."/>
            <person name="Conaway J.W."/>
            <person name="Conaway R.C."/>
            <person name="Emmons S.W."/>
            <person name="Fondell J.D."/>
            <person name="Freedman L.P."/>
            <person name="Fukasawa T."/>
            <person name="Gustafsson C.M."/>
            <person name="Han M."/>
            <person name="He X."/>
            <person name="Herman P.K."/>
            <person name="Hinnebusch A.G."/>
            <person name="Holmberg S."/>
            <person name="Holstege F.C.P."/>
            <person name="Jaehning J.A."/>
            <person name="Kim Y.-J."/>
            <person name="Kuras L."/>
            <person name="Leutz A."/>
            <person name="Lis J.T."/>
            <person name="Meisterernest M."/>
            <person name="Naeaer A.M."/>
            <person name="Nasmyth K."/>
            <person name="Parvin J.D."/>
            <person name="Ptashne M."/>
            <person name="Reinberg D."/>
            <person name="Ronne H."/>
            <person name="Sadowski I."/>
            <person name="Sakurai H."/>
            <person name="Sipiczki M."/>
            <person name="Sternberg P.W."/>
            <person name="Stillman D.J."/>
            <person name="Strich R."/>
            <person name="Struhl K."/>
            <person name="Svejstrup J.Q."/>
            <person name="Tuck S."/>
            <person name="Winston F."/>
            <person name="Roeder R.G."/>
            <person name="Kornberg R.D."/>
        </authorList>
    </citation>
    <scope>NOMENCLATURE</scope>
</reference>
<reference key="10">
    <citation type="journal article" date="2004" name="Nucleic Acids Res.">
        <title>A high resolution protein interaction map of the yeast Mediator complex.</title>
        <authorList>
            <person name="Guglielmi B."/>
            <person name="van Berkum N.L."/>
            <person name="Klapholz B."/>
            <person name="Bijma T."/>
            <person name="Boube M."/>
            <person name="Boschiero C."/>
            <person name="Bourbon H.-M."/>
            <person name="Holstege F.C.P."/>
            <person name="Werner M."/>
        </authorList>
    </citation>
    <scope>TOPOLOGY OF THE MEDIATOR COMPLEX</scope>
</reference>
<reference key="11">
    <citation type="journal article" date="2005" name="J. Biol. Chem.">
        <title>Preponderance of free mediator in the yeast Saccharomyces cerevisiae.</title>
        <authorList>
            <person name="Takagi Y."/>
            <person name="Chadick J.Z."/>
            <person name="Davis J.A."/>
            <person name="Asturias F.J."/>
        </authorList>
    </citation>
    <scope>CHARACTERIZATION OF THE MEDIATOR COMPLEX</scope>
</reference>
<reference key="12">
    <citation type="journal article" date="2005" name="J. Biol. Chem.">
        <title>Mediator and TFIIH govern carboxyl-terminal domain-dependent transcription in yeast extracts.</title>
        <authorList>
            <person name="Nair D."/>
            <person name="Kim Y."/>
            <person name="Myers L.C."/>
        </authorList>
    </citation>
    <scope>FUNCTION OF THE MEDIATOR COMPLEX</scope>
</reference>
<reference key="13">
    <citation type="journal article" date="2005" name="Mol. Cell">
        <title>Mediator expression profiling epistasis reveals a signal transduction pathway with antagonistic submodules and highly specific downstream targets.</title>
        <authorList>
            <person name="van de Peppel J."/>
            <person name="Kettelarij N."/>
            <person name="van Bakel H."/>
            <person name="Kockelkorn T.T.J.P."/>
            <person name="van Leenen D."/>
            <person name="Holstege F.C.P."/>
        </authorList>
    </citation>
    <scope>FUNCTION</scope>
</reference>
<reference key="14">
    <citation type="journal article" date="2006" name="J. Biol. Chem.">
        <title>Mediator as a general transcription factor.</title>
        <authorList>
            <person name="Takagi Y."/>
            <person name="Kornberg R.D."/>
        </authorList>
    </citation>
    <scope>FUNCTION OF THE MEDIATOR COMPLEX</scope>
</reference>
<reference key="15">
    <citation type="journal article" date="2006" name="Nat. Struct. Mol. Biol.">
        <title>Activator-specific recruitment of Mediator in vivo.</title>
        <authorList>
            <person name="Fan X."/>
            <person name="Chou D.M."/>
            <person name="Struhl K."/>
        </authorList>
    </citation>
    <scope>ASSOCIATION WITH PROMOTER REGIONS</scope>
</reference>
<reference key="16">
    <citation type="journal article" date="2007" name="J. Biol. Chem.">
        <title>Med19(Rox3) regulates intermodule interactions in the Saccharomyces cerevisiae mediator complex.</title>
        <authorList>
            <person name="Baidoobonso S.M."/>
            <person name="Guidi B.W."/>
            <person name="Myers L.C."/>
        </authorList>
    </citation>
    <scope>CHARACTERIZATION OF THE MEDIATOR COMPLEX</scope>
    <scope>INTERACTION OF THE MEDIATOR COMPLEX WITH RNA POLYMERASE II</scope>
</reference>
<reference key="17">
    <citation type="journal article" date="2008" name="Mol. Cell. Proteomics">
        <title>A multidimensional chromatography technology for in-depth phosphoproteome analysis.</title>
        <authorList>
            <person name="Albuquerque C.P."/>
            <person name="Smolka M.B."/>
            <person name="Payne S.H."/>
            <person name="Bafna V."/>
            <person name="Eng J."/>
            <person name="Zhou H."/>
        </authorList>
    </citation>
    <scope>IDENTIFICATION BY MASS SPECTROMETRY [LARGE SCALE ANALYSIS]</scope>
</reference>
<reference key="18">
    <citation type="journal article" date="2002" name="Mol. Cell">
        <title>Structure of the yeast RNA polymerase II holoenzyme: mediator conformation and polymerase interaction.</title>
        <authorList>
            <person name="Davis J.A."/>
            <person name="Takagi Y."/>
            <person name="Kornberg R.D."/>
            <person name="Asturias F.J."/>
        </authorList>
    </citation>
    <scope>ELECTRON MICROSCOPY OF MEDIATOR COMPLEX IN COMPLEX WITH RNA POLYMERASE II</scope>
</reference>
<sequence>MEKESVYNLALKCAERQLTSMEFSNLYKEFFNEKFPSLIQEEEEDTTTTANINEVKKASDLVDTPSNNTAATADTTHLHEALDIVCSDFVKILNLEKPLILADYIVEVLLVNYNSDMIKCFLPKLNSVRNSLLLAHFFSKSCSFFAKLSDTLIIDQVRKDLGNVIVPNILSLDMNSMNKELIAIVSKLLQTTLKLSPSPILLTSAGCKNGSFTLLNQLSQTNKLLFKRVSQTFEAKLHFKDTKPFLNKDSTNEFVGSPSLTSPQYIPSPLSSTKPPGSVNSAAKYKDMKLLRYYKNIWLNNKIINWEISNPDFLSKYSAITSSIFQESFNSVQNLDQLLTDLIETSFTCFAQFVSNKQYHQANSNLTLLERKWVIFITKHLPLLILENSSRSPRVVTNALDNIDEKVVKAIRIYFTEKDDNKTNNEDLFDDYPSTSLDIRHDFIKGLIMLNLQPASVINNYLREDQMIDTSILPTRDDLFVRNLQGIQEVVHNTNSFIISSLDTLELESITESITHDSSNGLFQVLHNFESVAPTKQREIVKAFLSIFEDAIKELNYNRIAKICALLFFNFSHSLTTILSFSSPAALMKTLIKFVDLSRNGRNGSNGNDESSEYETINISLSFSWAILLIINLTQTYGISVVDVALKYPELSIKNSFIINFISNLPNVSDKYYLEESNVNDSDMLTKSHNTVQSWLCDLFVNGSITDQLIQNIETRQLANLIPFIVKQVLLSVEIGVLTDISSLIGGFEYFLQPLLLVGLIKTFYWLEQFLSCVKNDTISEDILQGIFNLLNTLFNPVTLNEDSKAFHTAVLRLNAIPLLKVLRKFRVQSQSNYGIYSSDAQGDPNLEPLIAKLVAVLNVSPVYDVDPRIINSENDYSRKQLGYGKFLILNENPINKIMTNQINSFWSLHSSTYYNLDYLFELIELVTPKSFLFDVLKTLEYKLATYGVPGSENKRGSLDSEHVFDYFFYFLVLYDVKTAEEASQLIEYMENDAKKSKGDVDIKGEDLHEKNDSAEVRQETQPKAEATQDDDFDMLFGENDTSTQAYEEEEENEDNDGNNRTNNVPMIKAEETPSKTNKISILKRHSFAVLLHERKLLNDLALENGEITKTENEKFISYHDKYLCMLKTCVF</sequence>
<organism>
    <name type="scientific">Saccharomyces cerevisiae (strain ATCC 204508 / S288c)</name>
    <name type="common">Baker's yeast</name>
    <dbReference type="NCBI Taxonomy" id="559292"/>
    <lineage>
        <taxon>Eukaryota</taxon>
        <taxon>Fungi</taxon>
        <taxon>Dikarya</taxon>
        <taxon>Ascomycota</taxon>
        <taxon>Saccharomycotina</taxon>
        <taxon>Saccharomycetes</taxon>
        <taxon>Saccharomycetales</taxon>
        <taxon>Saccharomycetaceae</taxon>
        <taxon>Saccharomyces</taxon>
    </lineage>
</organism>
<name>MED5_YEAST</name>
<keyword id="KW-0002">3D-structure</keyword>
<keyword id="KW-0010">Activator</keyword>
<keyword id="KW-0539">Nucleus</keyword>
<keyword id="KW-1185">Reference proteome</keyword>
<keyword id="KW-0804">Transcription</keyword>
<keyword id="KW-0805">Transcription regulation</keyword>
<proteinExistence type="evidence at protein level"/>
<accession>P53114</accession>
<accession>D6VTZ9</accession>
<feature type="chain" id="PRO_0000096387" description="Mediator of RNA polymerase II transcription subunit 5">
    <location>
        <begin position="1"/>
        <end position="1132"/>
    </location>
</feature>
<feature type="region of interest" description="Disordered" evidence="1">
    <location>
        <begin position="998"/>
        <end position="1070"/>
    </location>
</feature>
<feature type="compositionally biased region" description="Basic and acidic residues" evidence="1">
    <location>
        <begin position="998"/>
        <end position="1023"/>
    </location>
</feature>
<feature type="compositionally biased region" description="Acidic residues" evidence="1">
    <location>
        <begin position="1047"/>
        <end position="1057"/>
    </location>
</feature>
<dbReference type="EMBL" id="Z48618">
    <property type="status" value="NOT_ANNOTATED_CDS"/>
    <property type="molecule type" value="Genomic_DNA"/>
</dbReference>
<dbReference type="EMBL" id="Z72673">
    <property type="protein sequence ID" value="CAA96863.1"/>
    <property type="molecule type" value="Genomic_DNA"/>
</dbReference>
<dbReference type="EMBL" id="BK006941">
    <property type="protein sequence ID" value="DAA07960.1"/>
    <property type="molecule type" value="Genomic_DNA"/>
</dbReference>
<dbReference type="PIR" id="S60433">
    <property type="entry name" value="S60433"/>
</dbReference>
<dbReference type="RefSeq" id="NP_011364.1">
    <property type="nucleotide sequence ID" value="NM_001181016.1"/>
</dbReference>
<dbReference type="PDB" id="7UIC">
    <property type="method" value="EM"/>
    <property type="resolution" value="3.70 A"/>
    <property type="chains" value="e=1-1132"/>
</dbReference>
<dbReference type="PDB" id="7UIK">
    <property type="method" value="EM"/>
    <property type="resolution" value="7.70 A"/>
    <property type="chains" value="e=1-1132"/>
</dbReference>
<dbReference type="PDB" id="7UIL">
    <property type="method" value="EM"/>
    <property type="resolution" value="4.30 A"/>
    <property type="chains" value="3/e=1-1132"/>
</dbReference>
<dbReference type="PDB" id="7UIO">
    <property type="method" value="EM"/>
    <property type="resolution" value="3.30 A"/>
    <property type="chains" value="Ae/Be=1-1132"/>
</dbReference>
<dbReference type="PDBsum" id="7UIC"/>
<dbReference type="PDBsum" id="7UIK"/>
<dbReference type="PDBsum" id="7UIL"/>
<dbReference type="PDBsum" id="7UIO"/>
<dbReference type="EMDB" id="EMD-26543"/>
<dbReference type="EMDB" id="EMD-26547"/>
<dbReference type="EMDB" id="EMD-26548"/>
<dbReference type="EMDB" id="EMD-26551"/>
<dbReference type="SMR" id="P53114"/>
<dbReference type="BioGRID" id="33102">
    <property type="interactions" value="628"/>
</dbReference>
<dbReference type="ComplexPortal" id="CPX-3226">
    <property type="entry name" value="Core mediator complex"/>
</dbReference>
<dbReference type="DIP" id="DIP-6632N"/>
<dbReference type="FunCoup" id="P53114">
    <property type="interactions" value="274"/>
</dbReference>
<dbReference type="IntAct" id="P53114">
    <property type="interactions" value="36"/>
</dbReference>
<dbReference type="MINT" id="P53114"/>
<dbReference type="STRING" id="4932.YGL151W"/>
<dbReference type="iPTMnet" id="P53114"/>
<dbReference type="PaxDb" id="4932-YGL151W"/>
<dbReference type="PeptideAtlas" id="P53114"/>
<dbReference type="EnsemblFungi" id="YGL151W_mRNA">
    <property type="protein sequence ID" value="YGL151W"/>
    <property type="gene ID" value="YGL151W"/>
</dbReference>
<dbReference type="GeneID" id="852726"/>
<dbReference type="KEGG" id="sce:YGL151W"/>
<dbReference type="AGR" id="SGD:S000003119"/>
<dbReference type="SGD" id="S000003119">
    <property type="gene designation" value="NUT1"/>
</dbReference>
<dbReference type="VEuPathDB" id="FungiDB:YGL151W"/>
<dbReference type="eggNOG" id="ENOG502R1HB">
    <property type="taxonomic scope" value="Eukaryota"/>
</dbReference>
<dbReference type="HOGENOM" id="CLU_281615_0_0_1"/>
<dbReference type="InParanoid" id="P53114"/>
<dbReference type="OMA" id="FTCFAQF"/>
<dbReference type="OrthoDB" id="5322661at2759"/>
<dbReference type="BioCyc" id="YEAST:G3O-30643-MONOMER"/>
<dbReference type="BRENDA" id="2.3.1.48">
    <property type="organism ID" value="984"/>
</dbReference>
<dbReference type="BioGRID-ORCS" id="852726">
    <property type="hits" value="0 hits in 10 CRISPR screens"/>
</dbReference>
<dbReference type="PRO" id="PR:P53114"/>
<dbReference type="Proteomes" id="UP000002311">
    <property type="component" value="Chromosome VII"/>
</dbReference>
<dbReference type="RNAct" id="P53114">
    <property type="molecule type" value="protein"/>
</dbReference>
<dbReference type="GO" id="GO:0070847">
    <property type="term" value="C:core mediator complex"/>
    <property type="evidence" value="ECO:0000353"/>
    <property type="project" value="ComplexPortal"/>
</dbReference>
<dbReference type="GO" id="GO:0016592">
    <property type="term" value="C:mediator complex"/>
    <property type="evidence" value="ECO:0000314"/>
    <property type="project" value="SGD"/>
</dbReference>
<dbReference type="GO" id="GO:0005739">
    <property type="term" value="C:mitochondrion"/>
    <property type="evidence" value="ECO:0007005"/>
    <property type="project" value="SGD"/>
</dbReference>
<dbReference type="GO" id="GO:0005634">
    <property type="term" value="C:nucleus"/>
    <property type="evidence" value="ECO:0000314"/>
    <property type="project" value="ComplexPortal"/>
</dbReference>
<dbReference type="GO" id="GO:0003712">
    <property type="term" value="F:transcription coregulator activity"/>
    <property type="evidence" value="ECO:0007669"/>
    <property type="project" value="InterPro"/>
</dbReference>
<dbReference type="GO" id="GO:0032968">
    <property type="term" value="P:positive regulation of transcription elongation by RNA polymerase II"/>
    <property type="evidence" value="ECO:0000314"/>
    <property type="project" value="ComplexPortal"/>
</dbReference>
<dbReference type="GO" id="GO:0060261">
    <property type="term" value="P:positive regulation of transcription initiation by RNA polymerase II"/>
    <property type="evidence" value="ECO:0000314"/>
    <property type="project" value="ComplexPortal"/>
</dbReference>
<dbReference type="GO" id="GO:0006357">
    <property type="term" value="P:regulation of transcription by RNA polymerase II"/>
    <property type="evidence" value="ECO:0000315"/>
    <property type="project" value="SGD"/>
</dbReference>
<dbReference type="GO" id="GO:0051123">
    <property type="term" value="P:RNA polymerase II preinitiation complex assembly"/>
    <property type="evidence" value="ECO:0000314"/>
    <property type="project" value="ComplexPortal"/>
</dbReference>
<dbReference type="GO" id="GO:0006366">
    <property type="term" value="P:transcription by RNA polymerase II"/>
    <property type="evidence" value="ECO:0000314"/>
    <property type="project" value="SGD"/>
</dbReference>
<dbReference type="InterPro" id="IPR014801">
    <property type="entry name" value="Mediator_Med5_fun"/>
</dbReference>
<dbReference type="PANTHER" id="PTHR35784">
    <property type="entry name" value="MEDIATOR OF RNA POLYMERASE II TRANSCRIPTION SUBUNIT 5"/>
    <property type="match status" value="1"/>
</dbReference>
<dbReference type="PANTHER" id="PTHR35784:SF1">
    <property type="entry name" value="MEDIATOR OF RNA POLYMERASE II TRANSCRIPTION SUBUNIT 5"/>
    <property type="match status" value="1"/>
</dbReference>
<dbReference type="Pfam" id="PF08689">
    <property type="entry name" value="Med5"/>
    <property type="match status" value="1"/>
</dbReference>